<proteinExistence type="inferred from homology"/>
<protein>
    <recommendedName>
        <fullName evidence="6">FAD-dependent monooxygenase paxM</fullName>
        <ecNumber evidence="8 9 10">1.-.-.-</ecNumber>
    </recommendedName>
    <alternativeName>
        <fullName evidence="6">Paxilline synthesis protein M</fullName>
    </alternativeName>
</protein>
<reference key="1">
    <citation type="journal article" date="2001" name="Mol. Microbiol.">
        <title>Molecular cloning and genetic analysis of an indole-diterpene gene cluster from Penicillium paxilli.</title>
        <authorList>
            <person name="Young C."/>
            <person name="McMillan L."/>
            <person name="Telfer E."/>
            <person name="Scott B."/>
        </authorList>
    </citation>
    <scope>NUCLEOTIDE SEQUENCE [GENOMIC DNA]</scope>
    <scope>FUNCTION</scope>
    <source>
        <strain>PN2013</strain>
    </source>
</reference>
<reference key="2">
    <citation type="journal article" date="2013" name="Toxins">
        <title>Deletion and gene expression analyses define the paxilline biosynthetic gene cluster in Penicillium paxilli.</title>
        <authorList>
            <person name="Scott B."/>
            <person name="Young C.A."/>
            <person name="Saikia S."/>
            <person name="McMillan L.K."/>
            <person name="Monahan B.J."/>
            <person name="Koulman A."/>
            <person name="Astin J."/>
            <person name="Eaton C.J."/>
            <person name="Bryant A."/>
            <person name="Wrenn R.E."/>
            <person name="Finch S.C."/>
            <person name="Tapper B.A."/>
            <person name="Parker E.J."/>
            <person name="Jameson G.B."/>
        </authorList>
    </citation>
    <scope>NUCLEOTIDE SEQUENCE [GENOMIC DNA]</scope>
    <scope>FUNCTION</scope>
    <scope>DISRUPTION PHENOTYPE</scope>
    <source>
        <strain>PN2013</strain>
    </source>
</reference>
<reference key="3">
    <citation type="journal article" date="2006" name="FEBS Lett.">
        <title>Four gene products are required for the fungal synthesis of the indole-diterpene, paspaline.</title>
        <authorList>
            <person name="Saikia S."/>
            <person name="Parker E.J."/>
            <person name="Koulman A."/>
            <person name="Scott B."/>
        </authorList>
    </citation>
    <scope>FUNCTION</scope>
</reference>
<sequence length="477" mass="53737">MEKAEFQVIIVGGSIGGLTLAHCLHRAGIKHVVLEKASDPAPQIGASIGILPNGARVLDQLQLYDQVEEHIEPLSKATIGLPDGFNFSSSYPKIIDQRFGFPIAFLDRQKMLEILYKGYPDPSKIRLGQRVTSIESLDDGVLITTTTGHVYRGDLLVGADGVHSIVRREIWKARGIARRVSKIKQDSSKLTVEFRCIFGISSAMPGLKLGEQVNALFDGLTIVTIHGKDGRIYWFVIQKLGKKYVYPDSPRYTSHETSIAAEEIRDVKFYENITFGELWDKRETSSMTALEENTFKVWHHGRCVLLGDSVHKMTPNVGQGANMAIEDAAALANLLRKMRISSGPYFPTSSQMEFLLQKYRDLRYERVNTIYQSSRFLVRFQVRDGIIYSLLSRYWAPYAGDLPADMASKTIADGTMCDFLPTPKRSGGGWEKYSKQGRSWSYLTQLMIYLFGLTIVYTSLTMMFDLEGALKFYFLQV</sequence>
<organism evidence="11">
    <name type="scientific">Penicillium paxilli</name>
    <dbReference type="NCBI Taxonomy" id="70109"/>
    <lineage>
        <taxon>Eukaryota</taxon>
        <taxon>Fungi</taxon>
        <taxon>Dikarya</taxon>
        <taxon>Ascomycota</taxon>
        <taxon>Pezizomycotina</taxon>
        <taxon>Eurotiomycetes</taxon>
        <taxon>Eurotiomycetidae</taxon>
        <taxon>Eurotiales</taxon>
        <taxon>Aspergillaceae</taxon>
        <taxon>Penicillium</taxon>
    </lineage>
</organism>
<comment type="function">
    <text evidence="3 4 5">FAD-dependent monooxygenase; part of the gene cluster that mediates the biosynthesis of paxilline, a mycotoxin that acts as an inhibitor of mammalian maxi-K channels (PubMed:11169115, PubMed:16494875, PubMed:23949005). PaxG, the geranylgeranyl diphosphate (GGPP) synthase is proposed to catalyze the first step in paxilline biosynthesis (PubMed:16494875, PubMed:23949005). Condensation of indole-3-glycerol phosphate with GGPP by paxC then forms 3-geranylgeranylindole (3-GGI), followed by epoxidation and cyclization of this intermediate (by paxM and paxB) to form paspaline (PubMed:16494875, PubMed:23949005). Paspaline is subsequently converted to 13-desoxypaxilline by paxP, the latter being then converted to paxilline by paxQ (PubMed:23949005). Finally paxilline can be mono- and di-prenylated by paxD (PubMed:23949005).</text>
</comment>
<comment type="cofactor">
    <cofactor evidence="7">
        <name>FAD</name>
        <dbReference type="ChEBI" id="CHEBI:57692"/>
    </cofactor>
</comment>
<comment type="pathway">
    <text evidence="3 4 5">Secondary metabolite biosynthesis.</text>
</comment>
<comment type="subcellular location">
    <subcellularLocation>
        <location evidence="2">Membrane</location>
        <topology evidence="2">Multi-pass membrane protein</topology>
    </subcellularLocation>
</comment>
<comment type="disruption phenotype">
    <text evidence="5">Impairs the production of paxilline (PubMed:23949005).</text>
</comment>
<comment type="similarity">
    <text evidence="7">Belongs to the paxM FAD-dependent monooxygenase family.</text>
</comment>
<dbReference type="EC" id="1.-.-.-" evidence="8 9 10"/>
<dbReference type="EMBL" id="HM171111">
    <property type="protein sequence ID" value="AAK11530.1"/>
    <property type="molecule type" value="Genomic_DNA"/>
</dbReference>
<dbReference type="SMR" id="Q9C447"/>
<dbReference type="BioCyc" id="MetaCyc:MONOMER-18636"/>
<dbReference type="GO" id="GO:0016020">
    <property type="term" value="C:membrane"/>
    <property type="evidence" value="ECO:0007669"/>
    <property type="project" value="UniProtKB-SubCell"/>
</dbReference>
<dbReference type="GO" id="GO:0071949">
    <property type="term" value="F:FAD binding"/>
    <property type="evidence" value="ECO:0007669"/>
    <property type="project" value="InterPro"/>
</dbReference>
<dbReference type="GO" id="GO:0004497">
    <property type="term" value="F:monooxygenase activity"/>
    <property type="evidence" value="ECO:0007669"/>
    <property type="project" value="UniProtKB-KW"/>
</dbReference>
<dbReference type="GO" id="GO:0140873">
    <property type="term" value="P:paxilline biosynthetic process"/>
    <property type="evidence" value="ECO:0000315"/>
    <property type="project" value="GO_Central"/>
</dbReference>
<dbReference type="Gene3D" id="3.50.50.60">
    <property type="entry name" value="FAD/NAD(P)-binding domain"/>
    <property type="match status" value="1"/>
</dbReference>
<dbReference type="InterPro" id="IPR002938">
    <property type="entry name" value="FAD-bd"/>
</dbReference>
<dbReference type="InterPro" id="IPR036188">
    <property type="entry name" value="FAD/NAD-bd_sf"/>
</dbReference>
<dbReference type="InterPro" id="IPR050562">
    <property type="entry name" value="FAD_mOase_fung"/>
</dbReference>
<dbReference type="PANTHER" id="PTHR47356:SF2">
    <property type="entry name" value="FAD-BINDING DOMAIN-CONTAINING PROTEIN-RELATED"/>
    <property type="match status" value="1"/>
</dbReference>
<dbReference type="PANTHER" id="PTHR47356">
    <property type="entry name" value="FAD-DEPENDENT MONOOXYGENASE ASQG-RELATED"/>
    <property type="match status" value="1"/>
</dbReference>
<dbReference type="Pfam" id="PF01494">
    <property type="entry name" value="FAD_binding_3"/>
    <property type="match status" value="1"/>
</dbReference>
<dbReference type="PRINTS" id="PR00420">
    <property type="entry name" value="RNGMNOXGNASE"/>
</dbReference>
<dbReference type="SUPFAM" id="SSF51905">
    <property type="entry name" value="FAD/NAD(P)-binding domain"/>
    <property type="match status" value="1"/>
</dbReference>
<name>PAXM_PENPX</name>
<accession>Q9C447</accession>
<feature type="chain" id="PRO_0000436119" description="FAD-dependent monooxygenase paxM">
    <location>
        <begin position="1"/>
        <end position="477"/>
    </location>
</feature>
<feature type="transmembrane region" description="Helical" evidence="2">
    <location>
        <begin position="4"/>
        <end position="24"/>
    </location>
</feature>
<feature type="transmembrane region" description="Helical" evidence="2">
    <location>
        <begin position="446"/>
        <end position="466"/>
    </location>
</feature>
<feature type="active site" evidence="1">
    <location>
        <position position="195"/>
    </location>
</feature>
<feature type="binding site" evidence="1">
    <location>
        <position position="35"/>
    </location>
    <ligand>
        <name>FAD</name>
        <dbReference type="ChEBI" id="CHEBI:57692"/>
    </ligand>
</feature>
<feature type="binding site" evidence="1">
    <location>
        <position position="49"/>
    </location>
    <ligand>
        <name>FAD</name>
        <dbReference type="ChEBI" id="CHEBI:57692"/>
    </ligand>
</feature>
<feature type="binding site" evidence="1">
    <location>
        <position position="108"/>
    </location>
    <ligand>
        <name>FAD</name>
        <dbReference type="ChEBI" id="CHEBI:57692"/>
    </ligand>
</feature>
<feature type="binding site" evidence="1">
    <location>
        <position position="308"/>
    </location>
    <ligand>
        <name>FAD</name>
        <dbReference type="ChEBI" id="CHEBI:57692"/>
    </ligand>
</feature>
<feature type="binding site" evidence="1">
    <location>
        <position position="321"/>
    </location>
    <ligand>
        <name>FAD</name>
        <dbReference type="ChEBI" id="CHEBI:57692"/>
    </ligand>
</feature>
<evidence type="ECO:0000250" key="1">
    <source>
        <dbReference type="UniProtKB" id="B8M9J8"/>
    </source>
</evidence>
<evidence type="ECO:0000255" key="2"/>
<evidence type="ECO:0000269" key="3">
    <source>
    </source>
</evidence>
<evidence type="ECO:0000269" key="4">
    <source>
    </source>
</evidence>
<evidence type="ECO:0000269" key="5">
    <source>
    </source>
</evidence>
<evidence type="ECO:0000303" key="6">
    <source>
    </source>
</evidence>
<evidence type="ECO:0000305" key="7"/>
<evidence type="ECO:0000305" key="8">
    <source>
    </source>
</evidence>
<evidence type="ECO:0000305" key="9">
    <source>
    </source>
</evidence>
<evidence type="ECO:0000305" key="10">
    <source>
    </source>
</evidence>
<evidence type="ECO:0000312" key="11">
    <source>
        <dbReference type="EMBL" id="AAK11530.1"/>
    </source>
</evidence>
<gene>
    <name evidence="6" type="primary">paxM</name>
</gene>
<keyword id="KW-0274">FAD</keyword>
<keyword id="KW-0285">Flavoprotein</keyword>
<keyword id="KW-0472">Membrane</keyword>
<keyword id="KW-0503">Monooxygenase</keyword>
<keyword id="KW-0560">Oxidoreductase</keyword>
<keyword id="KW-0812">Transmembrane</keyword>
<keyword id="KW-1133">Transmembrane helix</keyword>